<evidence type="ECO:0000255" key="1">
    <source>
        <dbReference type="HAMAP-Rule" id="MF_00056"/>
    </source>
</evidence>
<keyword id="KW-0963">Cytoplasm</keyword>
<keyword id="KW-0448">Lipopolysaccharide biosynthesis</keyword>
<keyword id="KW-0808">Transferase</keyword>
<comment type="catalytic activity">
    <reaction evidence="1">
        <text>D-arabinose 5-phosphate + phosphoenolpyruvate + H2O = 3-deoxy-alpha-D-manno-2-octulosonate-8-phosphate + phosphate</text>
        <dbReference type="Rhea" id="RHEA:14053"/>
        <dbReference type="ChEBI" id="CHEBI:15377"/>
        <dbReference type="ChEBI" id="CHEBI:43474"/>
        <dbReference type="ChEBI" id="CHEBI:57693"/>
        <dbReference type="ChEBI" id="CHEBI:58702"/>
        <dbReference type="ChEBI" id="CHEBI:85985"/>
        <dbReference type="EC" id="2.5.1.55"/>
    </reaction>
</comment>
<comment type="pathway">
    <text evidence="1">Carbohydrate biosynthesis; 3-deoxy-D-manno-octulosonate biosynthesis; 3-deoxy-D-manno-octulosonate from D-ribulose 5-phosphate: step 2/3.</text>
</comment>
<comment type="pathway">
    <text evidence="1">Bacterial outer membrane biogenesis; lipopolysaccharide biosynthesis.</text>
</comment>
<comment type="subcellular location">
    <subcellularLocation>
        <location evidence="1">Cytoplasm</location>
    </subcellularLocation>
</comment>
<comment type="similarity">
    <text evidence="1">Belongs to the KdsA family.</text>
</comment>
<proteinExistence type="inferred from homology"/>
<reference key="1">
    <citation type="submission" date="2006-05" db="EMBL/GenBank/DDBJ databases">
        <title>Complete sequence of chromosome 3 of Burkholderia cenocepacia AU 1054.</title>
        <authorList>
            <consortium name="US DOE Joint Genome Institute"/>
            <person name="Copeland A."/>
            <person name="Lucas S."/>
            <person name="Lapidus A."/>
            <person name="Barry K."/>
            <person name="Detter J.C."/>
            <person name="Glavina del Rio T."/>
            <person name="Hammon N."/>
            <person name="Israni S."/>
            <person name="Dalin E."/>
            <person name="Tice H."/>
            <person name="Pitluck S."/>
            <person name="Chain P."/>
            <person name="Malfatti S."/>
            <person name="Shin M."/>
            <person name="Vergez L."/>
            <person name="Schmutz J."/>
            <person name="Larimer F."/>
            <person name="Land M."/>
            <person name="Hauser L."/>
            <person name="Kyrpides N."/>
            <person name="Lykidis A."/>
            <person name="LiPuma J.J."/>
            <person name="Konstantinidis K."/>
            <person name="Tiedje J.M."/>
            <person name="Richardson P."/>
        </authorList>
    </citation>
    <scope>NUCLEOTIDE SEQUENCE [LARGE SCALE GENOMIC DNA]</scope>
    <source>
        <strain>AU 1054</strain>
    </source>
</reference>
<accession>Q1BHS1</accession>
<dbReference type="EC" id="2.5.1.55" evidence="1"/>
<dbReference type="EMBL" id="CP000380">
    <property type="protein sequence ID" value="ABF80834.1"/>
    <property type="molecule type" value="Genomic_DNA"/>
</dbReference>
<dbReference type="SMR" id="Q1BHS1"/>
<dbReference type="HOGENOM" id="CLU_036666_0_0_4"/>
<dbReference type="UniPathway" id="UPA00030"/>
<dbReference type="UniPathway" id="UPA00357">
    <property type="reaction ID" value="UER00474"/>
</dbReference>
<dbReference type="GO" id="GO:0005737">
    <property type="term" value="C:cytoplasm"/>
    <property type="evidence" value="ECO:0007669"/>
    <property type="project" value="UniProtKB-SubCell"/>
</dbReference>
<dbReference type="GO" id="GO:0008676">
    <property type="term" value="F:3-deoxy-8-phosphooctulonate synthase activity"/>
    <property type="evidence" value="ECO:0007669"/>
    <property type="project" value="UniProtKB-UniRule"/>
</dbReference>
<dbReference type="GO" id="GO:0019294">
    <property type="term" value="P:keto-3-deoxy-D-manno-octulosonic acid biosynthetic process"/>
    <property type="evidence" value="ECO:0007669"/>
    <property type="project" value="UniProtKB-UniRule"/>
</dbReference>
<dbReference type="Gene3D" id="3.20.20.70">
    <property type="entry name" value="Aldolase class I"/>
    <property type="match status" value="1"/>
</dbReference>
<dbReference type="HAMAP" id="MF_00056">
    <property type="entry name" value="KDO8P_synth"/>
    <property type="match status" value="1"/>
</dbReference>
<dbReference type="InterPro" id="IPR013785">
    <property type="entry name" value="Aldolase_TIM"/>
</dbReference>
<dbReference type="InterPro" id="IPR006218">
    <property type="entry name" value="DAHP1/KDSA"/>
</dbReference>
<dbReference type="InterPro" id="IPR006269">
    <property type="entry name" value="KDO8P_synthase"/>
</dbReference>
<dbReference type="NCBIfam" id="TIGR01362">
    <property type="entry name" value="KDO8P_synth"/>
    <property type="match status" value="1"/>
</dbReference>
<dbReference type="NCBIfam" id="NF003543">
    <property type="entry name" value="PRK05198.1"/>
    <property type="match status" value="1"/>
</dbReference>
<dbReference type="PANTHER" id="PTHR21057">
    <property type="entry name" value="PHOSPHO-2-DEHYDRO-3-DEOXYHEPTONATE ALDOLASE"/>
    <property type="match status" value="1"/>
</dbReference>
<dbReference type="Pfam" id="PF00793">
    <property type="entry name" value="DAHP_synth_1"/>
    <property type="match status" value="1"/>
</dbReference>
<dbReference type="SUPFAM" id="SSF51569">
    <property type="entry name" value="Aldolase"/>
    <property type="match status" value="1"/>
</dbReference>
<name>KDSA_BURO1</name>
<gene>
    <name evidence="1" type="primary">kdsA</name>
    <name type="ordered locus">Bcen_5969</name>
</gene>
<feature type="chain" id="PRO_0000304438" description="2-dehydro-3-deoxyphosphooctonate aldolase">
    <location>
        <begin position="1"/>
        <end position="284"/>
    </location>
</feature>
<organism>
    <name type="scientific">Burkholderia orbicola (strain AU 1054)</name>
    <dbReference type="NCBI Taxonomy" id="331271"/>
    <lineage>
        <taxon>Bacteria</taxon>
        <taxon>Pseudomonadati</taxon>
        <taxon>Pseudomonadota</taxon>
        <taxon>Betaproteobacteria</taxon>
        <taxon>Burkholderiales</taxon>
        <taxon>Burkholderiaceae</taxon>
        <taxon>Burkholderia</taxon>
        <taxon>Burkholderia cepacia complex</taxon>
        <taxon>Burkholderia orbicola</taxon>
    </lineage>
</organism>
<sequence>MKLCDFEVGLDQPFFLIAGTCVVESEQMTIDTAGRLKEICEKLNVPFIYKSSYDKANRSSGKSFRGLGMDEGLRILGEVKRQLGLPVLTDVHSIDEIEQVASVVDVLQTPAFLCRQTDFIHACARSGKPVNIKKGQFLAPHDMKNVIDKARDAARDAGLSEDRFMACERGVSFGYNNLVSDMRSLAIMRETNAPVVFDATHSVQLPGGQGTSSGGQREFVPVLARAAVATGVAGLFMETHPNPAEAKSDGPNAVPLNRMGALLETLVTLDQAVKRNPFLENDFN</sequence>
<protein>
    <recommendedName>
        <fullName evidence="1">2-dehydro-3-deoxyphosphooctonate aldolase</fullName>
        <ecNumber evidence="1">2.5.1.55</ecNumber>
    </recommendedName>
    <alternativeName>
        <fullName evidence="1">3-deoxy-D-manno-octulosonic acid 8-phosphate synthase</fullName>
    </alternativeName>
    <alternativeName>
        <fullName evidence="1">KDO-8-phosphate synthase</fullName>
        <shortName evidence="1">KDO 8-P synthase</shortName>
        <shortName evidence="1">KDOPS</shortName>
    </alternativeName>
    <alternativeName>
        <fullName evidence="1">Phospho-2-dehydro-3-deoxyoctonate aldolase</fullName>
    </alternativeName>
</protein>